<sequence length="931" mass="104897">MTTGFLQKIFGSRNQRLVKQYQKTVETINALETQIEQLTDDQLRGKTDEFRQRVAAGESLDKLLPEAFAVCREASRRVLKMRHFDVQLIGGMVLHYGKIAEMRTGEGKTLVATLPVYLNALAGRGVHVVTVNDYLAQRDAEWMARLYNFLGLSVGINLSGMEHEQKQQAYASDITYGTNNEFGFDYLRDNMVYETEARVQRALNFAVVDEVDSILIDEARTPLIISGQAEDHTELYVRMNALPPLLERQIGEEKADGTGVEKPGDYTLDEKSRQVFLTESGHEKAERLLAEWGLIGEGESLYAPQNITLMHHVYAALRAHTLFYKDQHYVVQNGEVVIVDEFTGRLMAGRRWSDGLHQAVEAKEHVKIQSENQTLASITFQNYFRMYAKLAGMTGTADTEAYEFNEIYGLETVVIPTNRPPKRIDKQDQIYKTAKERYDAVIRDIRECYERGQPVLVGTTSIENSELLSHLLKQAGLPHEVLNAKQHEREAAIVAEAGRPKRITIATNMAGRGTDIVLGGNAEKQAAFIEADEAIPADEKARRIKQLHDEWETLHEQVKAAGGLHIIGTERHESRRIDNQLRGRAGRQGDPGSSRFYLSLDDPLLRIFAGDRVRSIMDRLKMPEGEAIEAGIVTRSIESAQRKVEARNFDIRKQLLEYDDVSNDQRKVIYQQRNELLEAHDITETISAMRHGVITEVVRQFVPEGSIEEQWDVPELEEALRNDWQLDLAIQEMVNESSSITADEILDAVTTAADEQYEAKVAMVGRESFSAFERSVMLQTVDRLWREHLAALDHLRQGIHLRGYAQKNPKQEYKREAFELFAAMLDAIKQEVTRIVMNVQIQSPEQLEEAAEQIEERTGHLENVEYQHADYAESGAPVANVAAATAATATADMVGSAMTHGHAGELPKVGRNDPCPCGSGKKYKQCHGKLS</sequence>
<gene>
    <name evidence="1" type="primary">secA</name>
    <name type="ordered locus">Bamb_0472</name>
</gene>
<dbReference type="EC" id="7.4.2.8" evidence="1"/>
<dbReference type="EMBL" id="CP000440">
    <property type="protein sequence ID" value="ABI86031.1"/>
    <property type="molecule type" value="Genomic_DNA"/>
</dbReference>
<dbReference type="RefSeq" id="WP_011655897.1">
    <property type="nucleotide sequence ID" value="NC_008390.1"/>
</dbReference>
<dbReference type="SMR" id="Q0BIJ2"/>
<dbReference type="GeneID" id="93084111"/>
<dbReference type="KEGG" id="bam:Bamb_0472"/>
<dbReference type="PATRIC" id="fig|339670.21.peg.1134"/>
<dbReference type="eggNOG" id="COG0653">
    <property type="taxonomic scope" value="Bacteria"/>
</dbReference>
<dbReference type="Proteomes" id="UP000000662">
    <property type="component" value="Chromosome 1"/>
</dbReference>
<dbReference type="GO" id="GO:0031522">
    <property type="term" value="C:cell envelope Sec protein transport complex"/>
    <property type="evidence" value="ECO:0007669"/>
    <property type="project" value="TreeGrafter"/>
</dbReference>
<dbReference type="GO" id="GO:0005829">
    <property type="term" value="C:cytosol"/>
    <property type="evidence" value="ECO:0007669"/>
    <property type="project" value="TreeGrafter"/>
</dbReference>
<dbReference type="GO" id="GO:0005886">
    <property type="term" value="C:plasma membrane"/>
    <property type="evidence" value="ECO:0007669"/>
    <property type="project" value="UniProtKB-SubCell"/>
</dbReference>
<dbReference type="GO" id="GO:0005524">
    <property type="term" value="F:ATP binding"/>
    <property type="evidence" value="ECO:0007669"/>
    <property type="project" value="UniProtKB-UniRule"/>
</dbReference>
<dbReference type="GO" id="GO:0046872">
    <property type="term" value="F:metal ion binding"/>
    <property type="evidence" value="ECO:0007669"/>
    <property type="project" value="UniProtKB-KW"/>
</dbReference>
<dbReference type="GO" id="GO:0008564">
    <property type="term" value="F:protein-exporting ATPase activity"/>
    <property type="evidence" value="ECO:0007669"/>
    <property type="project" value="UniProtKB-EC"/>
</dbReference>
<dbReference type="GO" id="GO:0065002">
    <property type="term" value="P:intracellular protein transmembrane transport"/>
    <property type="evidence" value="ECO:0007669"/>
    <property type="project" value="UniProtKB-UniRule"/>
</dbReference>
<dbReference type="GO" id="GO:0017038">
    <property type="term" value="P:protein import"/>
    <property type="evidence" value="ECO:0007669"/>
    <property type="project" value="InterPro"/>
</dbReference>
<dbReference type="GO" id="GO:0006605">
    <property type="term" value="P:protein targeting"/>
    <property type="evidence" value="ECO:0007669"/>
    <property type="project" value="UniProtKB-UniRule"/>
</dbReference>
<dbReference type="GO" id="GO:0043952">
    <property type="term" value="P:protein transport by the Sec complex"/>
    <property type="evidence" value="ECO:0007669"/>
    <property type="project" value="TreeGrafter"/>
</dbReference>
<dbReference type="CDD" id="cd17928">
    <property type="entry name" value="DEXDc_SecA"/>
    <property type="match status" value="1"/>
</dbReference>
<dbReference type="CDD" id="cd18803">
    <property type="entry name" value="SF2_C_secA"/>
    <property type="match status" value="1"/>
</dbReference>
<dbReference type="FunFam" id="3.40.50.300:FF:000081">
    <property type="entry name" value="Preprotein translocase subunit SecA"/>
    <property type="match status" value="1"/>
</dbReference>
<dbReference type="FunFam" id="3.40.50.300:FF:000113">
    <property type="entry name" value="Preprotein translocase subunit SecA"/>
    <property type="match status" value="1"/>
</dbReference>
<dbReference type="FunFam" id="3.90.1440.10:FF:000001">
    <property type="entry name" value="Preprotein translocase subunit SecA"/>
    <property type="match status" value="1"/>
</dbReference>
<dbReference type="FunFam" id="1.10.3060.10:FF:000003">
    <property type="entry name" value="Protein translocase subunit SecA"/>
    <property type="match status" value="1"/>
</dbReference>
<dbReference type="Gene3D" id="1.10.3060.10">
    <property type="entry name" value="Helical scaffold and wing domains of SecA"/>
    <property type="match status" value="1"/>
</dbReference>
<dbReference type="Gene3D" id="3.40.50.300">
    <property type="entry name" value="P-loop containing nucleotide triphosphate hydrolases"/>
    <property type="match status" value="2"/>
</dbReference>
<dbReference type="Gene3D" id="3.90.1440.10">
    <property type="entry name" value="SecA, preprotein cross-linking domain"/>
    <property type="match status" value="1"/>
</dbReference>
<dbReference type="HAMAP" id="MF_01382">
    <property type="entry name" value="SecA"/>
    <property type="match status" value="1"/>
</dbReference>
<dbReference type="InterPro" id="IPR014001">
    <property type="entry name" value="Helicase_ATP-bd"/>
</dbReference>
<dbReference type="InterPro" id="IPR001650">
    <property type="entry name" value="Helicase_C-like"/>
</dbReference>
<dbReference type="InterPro" id="IPR027417">
    <property type="entry name" value="P-loop_NTPase"/>
</dbReference>
<dbReference type="InterPro" id="IPR004027">
    <property type="entry name" value="SEC_C_motif"/>
</dbReference>
<dbReference type="InterPro" id="IPR000185">
    <property type="entry name" value="SecA"/>
</dbReference>
<dbReference type="InterPro" id="IPR020937">
    <property type="entry name" value="SecA_CS"/>
</dbReference>
<dbReference type="InterPro" id="IPR011115">
    <property type="entry name" value="SecA_DEAD"/>
</dbReference>
<dbReference type="InterPro" id="IPR014018">
    <property type="entry name" value="SecA_motor_DEAD"/>
</dbReference>
<dbReference type="InterPro" id="IPR011130">
    <property type="entry name" value="SecA_preprotein_X-link_dom"/>
</dbReference>
<dbReference type="InterPro" id="IPR044722">
    <property type="entry name" value="SecA_SF2_C"/>
</dbReference>
<dbReference type="InterPro" id="IPR011116">
    <property type="entry name" value="SecA_Wing/Scaffold"/>
</dbReference>
<dbReference type="InterPro" id="IPR036266">
    <property type="entry name" value="SecA_Wing/Scaffold_sf"/>
</dbReference>
<dbReference type="InterPro" id="IPR036670">
    <property type="entry name" value="SecA_X-link_sf"/>
</dbReference>
<dbReference type="NCBIfam" id="NF009538">
    <property type="entry name" value="PRK12904.1"/>
    <property type="match status" value="1"/>
</dbReference>
<dbReference type="NCBIfam" id="TIGR00963">
    <property type="entry name" value="secA"/>
    <property type="match status" value="1"/>
</dbReference>
<dbReference type="PANTHER" id="PTHR30612:SF0">
    <property type="entry name" value="CHLOROPLAST PROTEIN-TRANSPORTING ATPASE"/>
    <property type="match status" value="1"/>
</dbReference>
<dbReference type="PANTHER" id="PTHR30612">
    <property type="entry name" value="SECA INNER MEMBRANE COMPONENT OF SEC PROTEIN SECRETION SYSTEM"/>
    <property type="match status" value="1"/>
</dbReference>
<dbReference type="Pfam" id="PF21090">
    <property type="entry name" value="P-loop_SecA"/>
    <property type="match status" value="1"/>
</dbReference>
<dbReference type="Pfam" id="PF02810">
    <property type="entry name" value="SEC-C"/>
    <property type="match status" value="1"/>
</dbReference>
<dbReference type="Pfam" id="PF07517">
    <property type="entry name" value="SecA_DEAD"/>
    <property type="match status" value="1"/>
</dbReference>
<dbReference type="Pfam" id="PF01043">
    <property type="entry name" value="SecA_PP_bind"/>
    <property type="match status" value="1"/>
</dbReference>
<dbReference type="Pfam" id="PF07516">
    <property type="entry name" value="SecA_SW"/>
    <property type="match status" value="1"/>
</dbReference>
<dbReference type="PRINTS" id="PR00906">
    <property type="entry name" value="SECA"/>
</dbReference>
<dbReference type="SMART" id="SM00957">
    <property type="entry name" value="SecA_DEAD"/>
    <property type="match status" value="1"/>
</dbReference>
<dbReference type="SMART" id="SM00958">
    <property type="entry name" value="SecA_PP_bind"/>
    <property type="match status" value="1"/>
</dbReference>
<dbReference type="SUPFAM" id="SSF81886">
    <property type="entry name" value="Helical scaffold and wing domains of SecA"/>
    <property type="match status" value="1"/>
</dbReference>
<dbReference type="SUPFAM" id="SSF52540">
    <property type="entry name" value="P-loop containing nucleoside triphosphate hydrolases"/>
    <property type="match status" value="2"/>
</dbReference>
<dbReference type="SUPFAM" id="SSF81767">
    <property type="entry name" value="Pre-protein crosslinking domain of SecA"/>
    <property type="match status" value="1"/>
</dbReference>
<dbReference type="PROSITE" id="PS01312">
    <property type="entry name" value="SECA"/>
    <property type="match status" value="1"/>
</dbReference>
<dbReference type="PROSITE" id="PS51196">
    <property type="entry name" value="SECA_MOTOR_DEAD"/>
    <property type="match status" value="1"/>
</dbReference>
<keyword id="KW-0067">ATP-binding</keyword>
<keyword id="KW-0997">Cell inner membrane</keyword>
<keyword id="KW-1003">Cell membrane</keyword>
<keyword id="KW-0963">Cytoplasm</keyword>
<keyword id="KW-0472">Membrane</keyword>
<keyword id="KW-0479">Metal-binding</keyword>
<keyword id="KW-0547">Nucleotide-binding</keyword>
<keyword id="KW-0653">Protein transport</keyword>
<keyword id="KW-1278">Translocase</keyword>
<keyword id="KW-0811">Translocation</keyword>
<keyword id="KW-0813">Transport</keyword>
<keyword id="KW-0862">Zinc</keyword>
<reference key="1">
    <citation type="submission" date="2006-08" db="EMBL/GenBank/DDBJ databases">
        <title>Complete sequence of chromosome 1 of Burkholderia cepacia AMMD.</title>
        <authorList>
            <person name="Copeland A."/>
            <person name="Lucas S."/>
            <person name="Lapidus A."/>
            <person name="Barry K."/>
            <person name="Detter J.C."/>
            <person name="Glavina del Rio T."/>
            <person name="Hammon N."/>
            <person name="Israni S."/>
            <person name="Pitluck S."/>
            <person name="Bruce D."/>
            <person name="Chain P."/>
            <person name="Malfatti S."/>
            <person name="Shin M."/>
            <person name="Vergez L."/>
            <person name="Schmutz J."/>
            <person name="Larimer F."/>
            <person name="Land M."/>
            <person name="Hauser L."/>
            <person name="Kyrpides N."/>
            <person name="Kim E."/>
            <person name="Parke J."/>
            <person name="Coenye T."/>
            <person name="Konstantinidis K."/>
            <person name="Ramette A."/>
            <person name="Tiedje J."/>
            <person name="Richardson P."/>
        </authorList>
    </citation>
    <scope>NUCLEOTIDE SEQUENCE [LARGE SCALE GENOMIC DNA]</scope>
    <source>
        <strain>ATCC BAA-244 / DSM 16087 / CCUG 44356 / LMG 19182 / AMMD</strain>
    </source>
</reference>
<feature type="chain" id="PRO_0000320748" description="Protein translocase subunit SecA">
    <location>
        <begin position="1"/>
        <end position="931"/>
    </location>
</feature>
<feature type="binding site" evidence="1">
    <location>
        <position position="87"/>
    </location>
    <ligand>
        <name>ATP</name>
        <dbReference type="ChEBI" id="CHEBI:30616"/>
    </ligand>
</feature>
<feature type="binding site" evidence="1">
    <location>
        <begin position="105"/>
        <end position="109"/>
    </location>
    <ligand>
        <name>ATP</name>
        <dbReference type="ChEBI" id="CHEBI:30616"/>
    </ligand>
</feature>
<feature type="binding site" evidence="1">
    <location>
        <position position="515"/>
    </location>
    <ligand>
        <name>ATP</name>
        <dbReference type="ChEBI" id="CHEBI:30616"/>
    </ligand>
</feature>
<feature type="binding site" evidence="1">
    <location>
        <position position="915"/>
    </location>
    <ligand>
        <name>Zn(2+)</name>
        <dbReference type="ChEBI" id="CHEBI:29105"/>
    </ligand>
</feature>
<feature type="binding site" evidence="1">
    <location>
        <position position="917"/>
    </location>
    <ligand>
        <name>Zn(2+)</name>
        <dbReference type="ChEBI" id="CHEBI:29105"/>
    </ligand>
</feature>
<feature type="binding site" evidence="1">
    <location>
        <position position="926"/>
    </location>
    <ligand>
        <name>Zn(2+)</name>
        <dbReference type="ChEBI" id="CHEBI:29105"/>
    </ligand>
</feature>
<feature type="binding site" evidence="1">
    <location>
        <position position="927"/>
    </location>
    <ligand>
        <name>Zn(2+)</name>
        <dbReference type="ChEBI" id="CHEBI:29105"/>
    </ligand>
</feature>
<comment type="function">
    <text evidence="1">Part of the Sec protein translocase complex. Interacts with the SecYEG preprotein conducting channel. Has a central role in coupling the hydrolysis of ATP to the transfer of proteins into and across the cell membrane, serving both as a receptor for the preprotein-SecB complex and as an ATP-driven molecular motor driving the stepwise translocation of polypeptide chains across the membrane.</text>
</comment>
<comment type="catalytic activity">
    <reaction evidence="1">
        <text>ATP + H2O + cellular proteinSide 1 = ADP + phosphate + cellular proteinSide 2.</text>
        <dbReference type="EC" id="7.4.2.8"/>
    </reaction>
</comment>
<comment type="cofactor">
    <cofactor evidence="1">
        <name>Zn(2+)</name>
        <dbReference type="ChEBI" id="CHEBI:29105"/>
    </cofactor>
    <text evidence="1">May bind 1 zinc ion per subunit.</text>
</comment>
<comment type="subunit">
    <text evidence="1">Monomer and homodimer. Part of the essential Sec protein translocation apparatus which comprises SecA, SecYEG and auxiliary proteins SecDF-YajC and YidC.</text>
</comment>
<comment type="subcellular location">
    <subcellularLocation>
        <location evidence="1">Cell inner membrane</location>
        <topology evidence="1">Peripheral membrane protein</topology>
        <orientation evidence="1">Cytoplasmic side</orientation>
    </subcellularLocation>
    <subcellularLocation>
        <location evidence="1">Cytoplasm</location>
    </subcellularLocation>
    <text evidence="1">Distribution is 50-50.</text>
</comment>
<comment type="similarity">
    <text evidence="1">Belongs to the SecA family.</text>
</comment>
<protein>
    <recommendedName>
        <fullName evidence="1">Protein translocase subunit SecA</fullName>
        <ecNumber evidence="1">7.4.2.8</ecNumber>
    </recommendedName>
</protein>
<proteinExistence type="inferred from homology"/>
<organism>
    <name type="scientific">Burkholderia ambifaria (strain ATCC BAA-244 / DSM 16087 / CCUG 44356 / LMG 19182 / AMMD)</name>
    <name type="common">Burkholderia cepacia (strain AMMD)</name>
    <dbReference type="NCBI Taxonomy" id="339670"/>
    <lineage>
        <taxon>Bacteria</taxon>
        <taxon>Pseudomonadati</taxon>
        <taxon>Pseudomonadota</taxon>
        <taxon>Betaproteobacteria</taxon>
        <taxon>Burkholderiales</taxon>
        <taxon>Burkholderiaceae</taxon>
        <taxon>Burkholderia</taxon>
        <taxon>Burkholderia cepacia complex</taxon>
    </lineage>
</organism>
<accession>Q0BIJ2</accession>
<name>SECA_BURCM</name>
<evidence type="ECO:0000255" key="1">
    <source>
        <dbReference type="HAMAP-Rule" id="MF_01382"/>
    </source>
</evidence>